<reference key="1">
    <citation type="journal article" date="1990" name="Mol. Endocrinol.">
        <title>A human early response gene homologous to murine nur77 and rat NGFI-B, and related to the nuclear receptor superfamily.</title>
        <authorList>
            <person name="Nakai A."/>
            <person name="Kartha S."/>
            <person name="Sakurai A."/>
            <person name="Toback F.G."/>
            <person name="Degroot L.J."/>
        </authorList>
    </citation>
    <scope>NUCLEOTIDE SEQUENCE [MRNA] (ISOFORM 1)</scope>
    <source>
        <tissue>Fetal skeletal muscle</tissue>
    </source>
</reference>
<reference key="2">
    <citation type="journal article" date="1989" name="J. Steroid Biochem.">
        <title>Isolation and characterization of human TR3 receptor: a member of steroid receptor superfamily.</title>
        <authorList>
            <person name="Chang C."/>
            <person name="Kokontis J."/>
            <person name="Liao S."/>
            <person name="Chang Y."/>
        </authorList>
    </citation>
    <scope>NUCLEOTIDE SEQUENCE [MRNA] (ISOFORM 1)</scope>
</reference>
<reference key="3">
    <citation type="submission" date="1996-05" db="EMBL/GenBank/DDBJ databases">
        <title>Identification of an isoform of human TR3 (NGFI-B, Nur77).</title>
        <authorList>
            <person name="Ohkura N."/>
            <person name="Ito M."/>
            <person name="Tsukada T."/>
            <person name="Sasaki K."/>
            <person name="Yamaguchi K."/>
            <person name="Miki K."/>
        </authorList>
    </citation>
    <scope>NUCLEOTIDE SEQUENCE [MRNA] (ISOFORM 3)</scope>
    <source>
        <tissue>Skeletal muscle</tissue>
    </source>
</reference>
<reference key="4">
    <citation type="submission" date="2008-12" db="EMBL/GenBank/DDBJ databases">
        <title>Comprehensive DNA-binding analysis of human hormone nuclear receptors by fluorescence correlation spectroscopy based on cell-free system.</title>
        <authorList>
            <person name="Kobayashi T."/>
            <person name="Kodani Y."/>
            <person name="Sawasaki T."/>
            <person name="Endo Y."/>
        </authorList>
    </citation>
    <scope>NUCLEOTIDE SEQUENCE [MRNA] (ISOFORM 1)</scope>
</reference>
<reference key="5">
    <citation type="submission" date="2010-12" db="EMBL/GenBank/DDBJ databases">
        <title>Isolation of cDNA coding for multiple human nuclear receptor clones.</title>
        <authorList>
            <person name="Kaighin V.A."/>
            <person name="Martin A.L."/>
            <person name="Aronstam R.S."/>
        </authorList>
    </citation>
    <scope>NUCLEOTIDE SEQUENCE [MRNA] (ISOFORM 1)</scope>
    <source>
        <tissue>Heart</tissue>
    </source>
</reference>
<reference key="6">
    <citation type="submission" date="2003-05" db="EMBL/GenBank/DDBJ databases">
        <title>Cloning of human full-length CDSs in BD Creator(TM) system donor vector.</title>
        <authorList>
            <person name="Kalnine N."/>
            <person name="Chen X."/>
            <person name="Rolfs A."/>
            <person name="Halleck A."/>
            <person name="Hines L."/>
            <person name="Eisenstein S."/>
            <person name="Koundinya M."/>
            <person name="Raphael J."/>
            <person name="Moreira D."/>
            <person name="Kelley T."/>
            <person name="LaBaer J."/>
            <person name="Lin Y."/>
            <person name="Phelan M."/>
            <person name="Farmer A."/>
        </authorList>
    </citation>
    <scope>NUCLEOTIDE SEQUENCE [LARGE SCALE MRNA] (ISOFORM 1)</scope>
</reference>
<reference key="7">
    <citation type="journal article" date="2004" name="Nat. Genet.">
        <title>Complete sequencing and characterization of 21,243 full-length human cDNAs.</title>
        <authorList>
            <person name="Ota T."/>
            <person name="Suzuki Y."/>
            <person name="Nishikawa T."/>
            <person name="Otsuki T."/>
            <person name="Sugiyama T."/>
            <person name="Irie R."/>
            <person name="Wakamatsu A."/>
            <person name="Hayashi K."/>
            <person name="Sato H."/>
            <person name="Nagai K."/>
            <person name="Kimura K."/>
            <person name="Makita H."/>
            <person name="Sekine M."/>
            <person name="Obayashi M."/>
            <person name="Nishi T."/>
            <person name="Shibahara T."/>
            <person name="Tanaka T."/>
            <person name="Ishii S."/>
            <person name="Yamamoto J."/>
            <person name="Saito K."/>
            <person name="Kawai Y."/>
            <person name="Isono Y."/>
            <person name="Nakamura Y."/>
            <person name="Nagahari K."/>
            <person name="Murakami K."/>
            <person name="Yasuda T."/>
            <person name="Iwayanagi T."/>
            <person name="Wagatsuma M."/>
            <person name="Shiratori A."/>
            <person name="Sudo H."/>
            <person name="Hosoiri T."/>
            <person name="Kaku Y."/>
            <person name="Kodaira H."/>
            <person name="Kondo H."/>
            <person name="Sugawara M."/>
            <person name="Takahashi M."/>
            <person name="Kanda K."/>
            <person name="Yokoi T."/>
            <person name="Furuya T."/>
            <person name="Kikkawa E."/>
            <person name="Omura Y."/>
            <person name="Abe K."/>
            <person name="Kamihara K."/>
            <person name="Katsuta N."/>
            <person name="Sato K."/>
            <person name="Tanikawa M."/>
            <person name="Yamazaki M."/>
            <person name="Ninomiya K."/>
            <person name="Ishibashi T."/>
            <person name="Yamashita H."/>
            <person name="Murakawa K."/>
            <person name="Fujimori K."/>
            <person name="Tanai H."/>
            <person name="Kimata M."/>
            <person name="Watanabe M."/>
            <person name="Hiraoka S."/>
            <person name="Chiba Y."/>
            <person name="Ishida S."/>
            <person name="Ono Y."/>
            <person name="Takiguchi S."/>
            <person name="Watanabe S."/>
            <person name="Yosida M."/>
            <person name="Hotuta T."/>
            <person name="Kusano J."/>
            <person name="Kanehori K."/>
            <person name="Takahashi-Fujii A."/>
            <person name="Hara H."/>
            <person name="Tanase T.-O."/>
            <person name="Nomura Y."/>
            <person name="Togiya S."/>
            <person name="Komai F."/>
            <person name="Hara R."/>
            <person name="Takeuchi K."/>
            <person name="Arita M."/>
            <person name="Imose N."/>
            <person name="Musashino K."/>
            <person name="Yuuki H."/>
            <person name="Oshima A."/>
            <person name="Sasaki N."/>
            <person name="Aotsuka S."/>
            <person name="Yoshikawa Y."/>
            <person name="Matsunawa H."/>
            <person name="Ichihara T."/>
            <person name="Shiohata N."/>
            <person name="Sano S."/>
            <person name="Moriya S."/>
            <person name="Momiyama H."/>
            <person name="Satoh N."/>
            <person name="Takami S."/>
            <person name="Terashima Y."/>
            <person name="Suzuki O."/>
            <person name="Nakagawa S."/>
            <person name="Senoh A."/>
            <person name="Mizoguchi H."/>
            <person name="Goto Y."/>
            <person name="Shimizu F."/>
            <person name="Wakebe H."/>
            <person name="Hishigaki H."/>
            <person name="Watanabe T."/>
            <person name="Sugiyama A."/>
            <person name="Takemoto M."/>
            <person name="Kawakami B."/>
            <person name="Yamazaki M."/>
            <person name="Watanabe K."/>
            <person name="Kumagai A."/>
            <person name="Itakura S."/>
            <person name="Fukuzumi Y."/>
            <person name="Fujimori Y."/>
            <person name="Komiyama M."/>
            <person name="Tashiro H."/>
            <person name="Tanigami A."/>
            <person name="Fujiwara T."/>
            <person name="Ono T."/>
            <person name="Yamada K."/>
            <person name="Fujii Y."/>
            <person name="Ozaki K."/>
            <person name="Hirao M."/>
            <person name="Ohmori Y."/>
            <person name="Kawabata A."/>
            <person name="Hikiji T."/>
            <person name="Kobatake N."/>
            <person name="Inagaki H."/>
            <person name="Ikema Y."/>
            <person name="Okamoto S."/>
            <person name="Okitani R."/>
            <person name="Kawakami T."/>
            <person name="Noguchi S."/>
            <person name="Itoh T."/>
            <person name="Shigeta K."/>
            <person name="Senba T."/>
            <person name="Matsumura K."/>
            <person name="Nakajima Y."/>
            <person name="Mizuno T."/>
            <person name="Morinaga M."/>
            <person name="Sasaki M."/>
            <person name="Togashi T."/>
            <person name="Oyama M."/>
            <person name="Hata H."/>
            <person name="Watanabe M."/>
            <person name="Komatsu T."/>
            <person name="Mizushima-Sugano J."/>
            <person name="Satoh T."/>
            <person name="Shirai Y."/>
            <person name="Takahashi Y."/>
            <person name="Nakagawa K."/>
            <person name="Okumura K."/>
            <person name="Nagase T."/>
            <person name="Nomura N."/>
            <person name="Kikuchi H."/>
            <person name="Masuho Y."/>
            <person name="Yamashita R."/>
            <person name="Nakai K."/>
            <person name="Yada T."/>
            <person name="Nakamura Y."/>
            <person name="Ohara O."/>
            <person name="Isogai T."/>
            <person name="Sugano S."/>
        </authorList>
    </citation>
    <scope>NUCLEOTIDE SEQUENCE [LARGE SCALE MRNA] (ISOFORMS 2 AND 3)</scope>
    <source>
        <tissue>Brain</tissue>
        <tissue>Trachea</tissue>
    </source>
</reference>
<reference key="8">
    <citation type="submission" date="2004-06" db="EMBL/GenBank/DDBJ databases">
        <title>Cloning of human full open reading frames in Gateway(TM) system entry vector (pDONR201).</title>
        <authorList>
            <person name="Ebert L."/>
            <person name="Schick M."/>
            <person name="Neubert P."/>
            <person name="Schatten R."/>
            <person name="Henze S."/>
            <person name="Korn B."/>
        </authorList>
    </citation>
    <scope>NUCLEOTIDE SEQUENCE [LARGE SCALE MRNA] (ISOFORM 1)</scope>
</reference>
<reference key="9">
    <citation type="journal article" date="2006" name="Nature">
        <title>The finished DNA sequence of human chromosome 12.</title>
        <authorList>
            <person name="Scherer S.E."/>
            <person name="Muzny D.M."/>
            <person name="Buhay C.J."/>
            <person name="Chen R."/>
            <person name="Cree A."/>
            <person name="Ding Y."/>
            <person name="Dugan-Rocha S."/>
            <person name="Gill R."/>
            <person name="Gunaratne P."/>
            <person name="Harris R.A."/>
            <person name="Hawes A.C."/>
            <person name="Hernandez J."/>
            <person name="Hodgson A.V."/>
            <person name="Hume J."/>
            <person name="Jackson A."/>
            <person name="Khan Z.M."/>
            <person name="Kovar-Smith C."/>
            <person name="Lewis L.R."/>
            <person name="Lozado R.J."/>
            <person name="Metzker M.L."/>
            <person name="Milosavljevic A."/>
            <person name="Miner G.R."/>
            <person name="Montgomery K.T."/>
            <person name="Morgan M.B."/>
            <person name="Nazareth L.V."/>
            <person name="Scott G."/>
            <person name="Sodergren E."/>
            <person name="Song X.-Z."/>
            <person name="Steffen D."/>
            <person name="Lovering R.C."/>
            <person name="Wheeler D.A."/>
            <person name="Worley K.C."/>
            <person name="Yuan Y."/>
            <person name="Zhang Z."/>
            <person name="Adams C.Q."/>
            <person name="Ansari-Lari M.A."/>
            <person name="Ayele M."/>
            <person name="Brown M.J."/>
            <person name="Chen G."/>
            <person name="Chen Z."/>
            <person name="Clerc-Blankenburg K.P."/>
            <person name="Davis C."/>
            <person name="Delgado O."/>
            <person name="Dinh H.H."/>
            <person name="Draper H."/>
            <person name="Gonzalez-Garay M.L."/>
            <person name="Havlak P."/>
            <person name="Jackson L.R."/>
            <person name="Jacob L.S."/>
            <person name="Kelly S.H."/>
            <person name="Li L."/>
            <person name="Li Z."/>
            <person name="Liu J."/>
            <person name="Liu W."/>
            <person name="Lu J."/>
            <person name="Maheshwari M."/>
            <person name="Nguyen B.-V."/>
            <person name="Okwuonu G.O."/>
            <person name="Pasternak S."/>
            <person name="Perez L.M."/>
            <person name="Plopper F.J.H."/>
            <person name="Santibanez J."/>
            <person name="Shen H."/>
            <person name="Tabor P.E."/>
            <person name="Verduzco D."/>
            <person name="Waldron L."/>
            <person name="Wang Q."/>
            <person name="Williams G.A."/>
            <person name="Zhang J."/>
            <person name="Zhou J."/>
            <person name="Allen C.C."/>
            <person name="Amin A.G."/>
            <person name="Anyalebechi V."/>
            <person name="Bailey M."/>
            <person name="Barbaria J.A."/>
            <person name="Bimage K.E."/>
            <person name="Bryant N.P."/>
            <person name="Burch P.E."/>
            <person name="Burkett C.E."/>
            <person name="Burrell K.L."/>
            <person name="Calderon E."/>
            <person name="Cardenas V."/>
            <person name="Carter K."/>
            <person name="Casias K."/>
            <person name="Cavazos I."/>
            <person name="Cavazos S.R."/>
            <person name="Ceasar H."/>
            <person name="Chacko J."/>
            <person name="Chan S.N."/>
            <person name="Chavez D."/>
            <person name="Christopoulos C."/>
            <person name="Chu J."/>
            <person name="Cockrell R."/>
            <person name="Cox C.D."/>
            <person name="Dang M."/>
            <person name="Dathorne S.R."/>
            <person name="David R."/>
            <person name="Davis C.M."/>
            <person name="Davy-Carroll L."/>
            <person name="Deshazo D.R."/>
            <person name="Donlin J.E."/>
            <person name="D'Souza L."/>
            <person name="Eaves K.A."/>
            <person name="Egan A."/>
            <person name="Emery-Cohen A.J."/>
            <person name="Escotto M."/>
            <person name="Flagg N."/>
            <person name="Forbes L.D."/>
            <person name="Gabisi A.M."/>
            <person name="Garza M."/>
            <person name="Hamilton C."/>
            <person name="Henderson N."/>
            <person name="Hernandez O."/>
            <person name="Hines S."/>
            <person name="Hogues M.E."/>
            <person name="Huang M."/>
            <person name="Idlebird D.G."/>
            <person name="Johnson R."/>
            <person name="Jolivet A."/>
            <person name="Jones S."/>
            <person name="Kagan R."/>
            <person name="King L.M."/>
            <person name="Leal B."/>
            <person name="Lebow H."/>
            <person name="Lee S."/>
            <person name="LeVan J.M."/>
            <person name="Lewis L.C."/>
            <person name="London P."/>
            <person name="Lorensuhewa L.M."/>
            <person name="Loulseged H."/>
            <person name="Lovett D.A."/>
            <person name="Lucier A."/>
            <person name="Lucier R.L."/>
            <person name="Ma J."/>
            <person name="Madu R.C."/>
            <person name="Mapua P."/>
            <person name="Martindale A.D."/>
            <person name="Martinez E."/>
            <person name="Massey E."/>
            <person name="Mawhiney S."/>
            <person name="Meador M.G."/>
            <person name="Mendez S."/>
            <person name="Mercado C."/>
            <person name="Mercado I.C."/>
            <person name="Merritt C.E."/>
            <person name="Miner Z.L."/>
            <person name="Minja E."/>
            <person name="Mitchell T."/>
            <person name="Mohabbat F."/>
            <person name="Mohabbat K."/>
            <person name="Montgomery B."/>
            <person name="Moore N."/>
            <person name="Morris S."/>
            <person name="Munidasa M."/>
            <person name="Ngo R.N."/>
            <person name="Nguyen N.B."/>
            <person name="Nickerson E."/>
            <person name="Nwaokelemeh O.O."/>
            <person name="Nwokenkwo S."/>
            <person name="Obregon M."/>
            <person name="Oguh M."/>
            <person name="Oragunye N."/>
            <person name="Oviedo R.J."/>
            <person name="Parish B.J."/>
            <person name="Parker D.N."/>
            <person name="Parrish J."/>
            <person name="Parks K.L."/>
            <person name="Paul H.A."/>
            <person name="Payton B.A."/>
            <person name="Perez A."/>
            <person name="Perrin W."/>
            <person name="Pickens A."/>
            <person name="Primus E.L."/>
            <person name="Pu L.-L."/>
            <person name="Puazo M."/>
            <person name="Quiles M.M."/>
            <person name="Quiroz J.B."/>
            <person name="Rabata D."/>
            <person name="Reeves K."/>
            <person name="Ruiz S.J."/>
            <person name="Shao H."/>
            <person name="Sisson I."/>
            <person name="Sonaike T."/>
            <person name="Sorelle R.P."/>
            <person name="Sutton A.E."/>
            <person name="Svatek A.F."/>
            <person name="Svetz L.A."/>
            <person name="Tamerisa K.S."/>
            <person name="Taylor T.R."/>
            <person name="Teague B."/>
            <person name="Thomas N."/>
            <person name="Thorn R.D."/>
            <person name="Trejos Z.Y."/>
            <person name="Trevino B.K."/>
            <person name="Ukegbu O.N."/>
            <person name="Urban J.B."/>
            <person name="Vasquez L.I."/>
            <person name="Vera V.A."/>
            <person name="Villasana D.M."/>
            <person name="Wang L."/>
            <person name="Ward-Moore S."/>
            <person name="Warren J.T."/>
            <person name="Wei X."/>
            <person name="White F."/>
            <person name="Williamson A.L."/>
            <person name="Wleczyk R."/>
            <person name="Wooden H.S."/>
            <person name="Wooden S.H."/>
            <person name="Yen J."/>
            <person name="Yoon L."/>
            <person name="Yoon V."/>
            <person name="Zorrilla S.E."/>
            <person name="Nelson D."/>
            <person name="Kucherlapati R."/>
            <person name="Weinstock G."/>
            <person name="Gibbs R.A."/>
        </authorList>
    </citation>
    <scope>NUCLEOTIDE SEQUENCE [LARGE SCALE GENOMIC DNA]</scope>
</reference>
<reference key="10">
    <citation type="submission" date="2005-07" db="EMBL/GenBank/DDBJ databases">
        <authorList>
            <person name="Mural R.J."/>
            <person name="Istrail S."/>
            <person name="Sutton G."/>
            <person name="Florea L."/>
            <person name="Halpern A.L."/>
            <person name="Mobarry C.M."/>
            <person name="Lippert R."/>
            <person name="Walenz B."/>
            <person name="Shatkay H."/>
            <person name="Dew I."/>
            <person name="Miller J.R."/>
            <person name="Flanigan M.J."/>
            <person name="Edwards N.J."/>
            <person name="Bolanos R."/>
            <person name="Fasulo D."/>
            <person name="Halldorsson B.V."/>
            <person name="Hannenhalli S."/>
            <person name="Turner R."/>
            <person name="Yooseph S."/>
            <person name="Lu F."/>
            <person name="Nusskern D.R."/>
            <person name="Shue B.C."/>
            <person name="Zheng X.H."/>
            <person name="Zhong F."/>
            <person name="Delcher A.L."/>
            <person name="Huson D.H."/>
            <person name="Kravitz S.A."/>
            <person name="Mouchard L."/>
            <person name="Reinert K."/>
            <person name="Remington K.A."/>
            <person name="Clark A.G."/>
            <person name="Waterman M.S."/>
            <person name="Eichler E.E."/>
            <person name="Adams M.D."/>
            <person name="Hunkapiller M.W."/>
            <person name="Myers E.W."/>
            <person name="Venter J.C."/>
        </authorList>
    </citation>
    <scope>NUCLEOTIDE SEQUENCE [LARGE SCALE GENOMIC DNA]</scope>
</reference>
<reference key="11">
    <citation type="journal article" date="2004" name="Genome Res.">
        <title>The status, quality, and expansion of the NIH full-length cDNA project: the Mammalian Gene Collection (MGC).</title>
        <authorList>
            <consortium name="The MGC Project Team"/>
        </authorList>
    </citation>
    <scope>NUCLEOTIDE SEQUENCE [LARGE SCALE MRNA] (ISOFORM 1)</scope>
    <source>
        <tissue>Skin</tissue>
    </source>
</reference>
<reference key="12">
    <citation type="journal article" date="1991" name="Cell Growth Differ.">
        <title>Phorbol ester, forskolin, and serum induction of a human colon nuclear hormone receptor gene related to the NUR 77/NGFI-B genes.</title>
        <authorList>
            <person name="Bondy G.P."/>
        </authorList>
    </citation>
    <scope>NUCLEOTIDE SEQUENCE [MRNA] OF 35-398 (ISOFORM 1)</scope>
    <scope>INDUCTION</scope>
    <source>
        <tissue>Colon adenocarcinoma</tissue>
    </source>
</reference>
<reference key="13">
    <citation type="journal article" date="1994" name="Nature">
        <title>Requirement for the orphan steroid receptor Nur77 in apoptosis of T-cell hybridomas.</title>
        <authorList>
            <person name="Woronicz J.D."/>
            <person name="Calnan B."/>
            <person name="Ngo V."/>
            <person name="Winoto A."/>
        </authorList>
    </citation>
    <scope>FUNCTION</scope>
    <scope>SUBCELLULAR LOCATION</scope>
</reference>
<reference key="14">
    <citation type="journal article" date="1997" name="Mol. Cell. Biol.">
        <title>Novel dimeric Nur77 signaling mechanism in endocrine and lymphoid cells.</title>
        <authorList>
            <person name="Philips A."/>
            <person name="Lesage S."/>
            <person name="Gingras R."/>
            <person name="Maira M.H."/>
            <person name="Gauthier Y."/>
            <person name="Hugo P."/>
            <person name="Drouin J."/>
        </authorList>
    </citation>
    <scope>FUNCTION</scope>
    <scope>ACTIVITY REGULATION</scope>
    <scope>SUBUNIT</scope>
    <scope>INDUCTION</scope>
</reference>
<reference key="15">
    <citation type="journal article" date="2004" name="Mol. Cell. Biol.">
        <title>Retinoid X receptor regulates Nur77/TR3-dependent apoptosis [corrected] by modulating its nuclear export and mitochondrial targeting.</title>
        <authorList>
            <person name="Cao X."/>
            <person name="Liu W."/>
            <person name="Lin F."/>
            <person name="Li H."/>
            <person name="Kolluri S.K."/>
            <person name="Lin B."/>
            <person name="Han Y.H."/>
            <person name="Dawson M.I."/>
            <person name="Zhang X.K."/>
        </authorList>
    </citation>
    <scope>INTERACTION WITH RXRA</scope>
    <scope>SUBCELLULAR LOCATION</scope>
</reference>
<reference key="16">
    <citation type="journal article" date="2004" name="Nucleic Acids Res.">
        <title>Negative cross-talk between the human orphan nuclear receptor Nur77/NAK-1/TR3 and nuclear factor-kappaB.</title>
        <authorList>
            <person name="Harant H."/>
            <person name="Lindley I.J."/>
        </authorList>
    </citation>
    <scope>FUNCTION</scope>
</reference>
<reference key="17">
    <citation type="journal article" date="2005" name="Mol. Endocrinol.">
        <title>CR6-interacting factor 1 interacts with orphan nuclear receptor Nur77 and inhibits its transactivation.</title>
        <authorList>
            <person name="Park K.C."/>
            <person name="Song K.-H."/>
            <person name="Chung H.K."/>
            <person name="Kim H."/>
            <person name="Kim D.W."/>
            <person name="Song J.H."/>
            <person name="Hwang E.S."/>
            <person name="Jung H.S."/>
            <person name="Park S.-H."/>
            <person name="Bae I."/>
            <person name="Lee I.K."/>
            <person name="Choi H.-S."/>
            <person name="Shong M."/>
        </authorList>
    </citation>
    <scope>INTERACTION WITH GADD45GIP1</scope>
</reference>
<reference key="18">
    <citation type="journal article" date="2007" name="J. Biol. Chem.">
        <title>RAS/ERK signaling promotes site-specific ribosomal protein S6 phosphorylation via RSK and stimulates cap-dependent translation.</title>
        <authorList>
            <person name="Roux P.P."/>
            <person name="Shahbazian D."/>
            <person name="Vu H."/>
            <person name="Holz M.K."/>
            <person name="Cohen M.S."/>
            <person name="Taunton J."/>
            <person name="Sonenberg N."/>
            <person name="Blenis J."/>
        </authorList>
    </citation>
    <scope>PHOSPHORYLATION AT SER-351</scope>
</reference>
<reference key="19">
    <citation type="journal article" date="2007" name="Mol. Endocrinol.">
        <title>Orphan receptor TR3 attenuates the p300-induced acetylation of retinoid X receptor-alpha.</title>
        <authorList>
            <person name="Zhao W.X."/>
            <person name="Tian M."/>
            <person name="Zhao B.X."/>
            <person name="Li G.D."/>
            <person name="Liu B."/>
            <person name="Zhan Y.Y."/>
            <person name="Chen H.Z."/>
            <person name="Wu Q."/>
        </authorList>
    </citation>
    <scope>INTERACTION WITH RXRA</scope>
    <scope>SUBCELLULAR LOCATION</scope>
    <scope>MUTAGENESIS OF 1-MET--LYS-50 AND 299-ALA--PRO-361</scope>
</reference>
<reference key="20">
    <citation type="journal article" date="2008" name="Mol. Cell">
        <title>Kinase-selective enrichment enables quantitative phosphoproteomics of the kinome across the cell cycle.</title>
        <authorList>
            <person name="Daub H."/>
            <person name="Olsen J.V."/>
            <person name="Bairlein M."/>
            <person name="Gnad F."/>
            <person name="Oppermann F.S."/>
            <person name="Korner R."/>
            <person name="Greff Z."/>
            <person name="Keri G."/>
            <person name="Stemmann O."/>
            <person name="Mann M."/>
        </authorList>
    </citation>
    <scope>IDENTIFICATION BY MASS SPECTROMETRY [LARGE SCALE ANALYSIS]</scope>
    <source>
        <tissue>Cervix carcinoma</tissue>
    </source>
</reference>
<reference key="21">
    <citation type="journal article" date="2008" name="Nat. Chem. Biol.">
        <title>Cytosporone B is an agonist for nuclear orphan receptor Nur77.</title>
        <authorList>
            <person name="Zhan Y."/>
            <person name="Du X."/>
            <person name="Chen H."/>
            <person name="Liu J."/>
            <person name="Zhao B."/>
            <person name="Huang D."/>
            <person name="Li G."/>
            <person name="Xu Q."/>
            <person name="Zhang M."/>
            <person name="Weimer B.C."/>
            <person name="Chen D."/>
            <person name="Cheng Z."/>
            <person name="Zhang L."/>
            <person name="Li Q."/>
            <person name="Li S."/>
            <person name="Zheng Z."/>
            <person name="Song S."/>
            <person name="Huang Y."/>
            <person name="Ye Z."/>
            <person name="Su W."/>
            <person name="Lin S.C."/>
            <person name="Shen Y."/>
            <person name="Wu Q."/>
        </authorList>
    </citation>
    <scope>FUNCTION</scope>
    <scope>ACTIVITY REGULATION</scope>
    <scope>SUBUNIT</scope>
    <scope>INTERACTION WITH NCOA1; NCOA1 AND NCOA3</scope>
    <scope>SUBCELLULAR LOCATION</scope>
    <scope>INDUCTION</scope>
    <scope>MUTAGENESIS OF TYR-453</scope>
</reference>
<reference key="22">
    <citation type="journal article" date="2008" name="Proc. Natl. Acad. Sci. U.S.A.">
        <title>A quantitative atlas of mitotic phosphorylation.</title>
        <authorList>
            <person name="Dephoure N."/>
            <person name="Zhou C."/>
            <person name="Villen J."/>
            <person name="Beausoleil S.A."/>
            <person name="Bakalarski C.E."/>
            <person name="Elledge S.J."/>
            <person name="Gygi S.P."/>
        </authorList>
    </citation>
    <scope>PHOSPHORYLATION [LARGE SCALE ANALYSIS] AT SER-351</scope>
    <scope>IDENTIFICATION BY MASS SPECTROMETRY [LARGE SCALE ANALYSIS]</scope>
    <source>
        <tissue>Cervix carcinoma</tissue>
    </source>
</reference>
<reference key="23">
    <citation type="journal article" date="2010" name="Biochem. Pharmacol.">
        <title>Regulation of Nur77 protein turnover through acetylation and deacetylation induced by p300 and HDAC1.</title>
        <authorList>
            <person name="Kang S.A."/>
            <person name="Na H."/>
            <person name="Kang H.J."/>
            <person name="Kim S.H."/>
            <person name="Lee M.H."/>
            <person name="Lee M.O."/>
        </authorList>
    </citation>
    <scope>ACETYLATION</scope>
    <scope>SUBCELLULAR LOCATION</scope>
</reference>
<reference key="24">
    <citation type="journal article" date="2012" name="Circ. Res.">
        <title>The interferon stimulated gene 12 inactivates vasculoprotective functions of NR4A nuclear receptors.</title>
        <authorList>
            <person name="Papac-Milicevic N."/>
            <person name="Breuss J.M."/>
            <person name="Zaujec J."/>
            <person name="Ryban L."/>
            <person name="Plyushch T."/>
            <person name="Wagner G.A."/>
            <person name="Fenzl S."/>
            <person name="Dremsek P."/>
            <person name="Cabaravdic M."/>
            <person name="Steiner M."/>
            <person name="Glass C.K."/>
            <person name="Binder C.J."/>
            <person name="Uhrin P."/>
            <person name="Binder B.R."/>
        </authorList>
    </citation>
    <scope>INTERACTION WITH IFI27</scope>
    <scope>SUBCELLULAR LOCATION</scope>
</reference>
<reference key="25">
    <citation type="journal article" date="2023" name="Immunity">
        <title>The orphan receptor Nur77 binds cytoplasmic LPS to activate the non-canonical NLRP3 inflammasome.</title>
        <authorList>
            <person name="Zhu F."/>
            <person name="Ma J."/>
            <person name="Li W."/>
            <person name="Liu Q."/>
            <person name="Qin X."/>
            <person name="Qian Y."/>
            <person name="Wang C."/>
            <person name="Zhang Y."/>
            <person name="Li Y."/>
            <person name="Jiang D."/>
            <person name="Wang S."/>
            <person name="Xia P."/>
        </authorList>
    </citation>
    <scope>DOMAIN NR LBD</scope>
    <scope>IDENTIFICATION BY MASS SPECTROMETRY</scope>
</reference>
<reference evidence="22 23" key="26">
    <citation type="journal article" date="2012" name="Nat. Chem. Biol.">
        <title>The orphan nuclear receptor Nur77 regulates LKB1 localization and activates AMPK.</title>
        <authorList>
            <person name="Zhan Y.Y."/>
            <person name="Chen Y."/>
            <person name="Zhang Q."/>
            <person name="Zhuang J.J."/>
            <person name="Tian M."/>
            <person name="Chen H.Z."/>
            <person name="Zhang L.R."/>
            <person name="Zhang H.K."/>
            <person name="He J.P."/>
            <person name="Wang W.J."/>
            <person name="Wu R."/>
            <person name="Wang Y."/>
            <person name="Shi C."/>
            <person name="Yang K."/>
            <person name="Li A.Z."/>
            <person name="Xin Y.Z."/>
            <person name="Li T.Y."/>
            <person name="Yang J.Y."/>
            <person name="Zheng Z.H."/>
            <person name="Yu C.D."/>
            <person name="Lin S.C."/>
            <person name="Chang C."/>
            <person name="Huang P.Q."/>
            <person name="Lin T."/>
            <person name="Wu Q."/>
        </authorList>
    </citation>
    <scope>X-RAY CRYSTALLOGRAPHY (2.06 ANGSTROMS) OF 351-598 ALONE AND IN COMPLEX WITH ANTAGONIST</scope>
    <scope>FUNCTION</scope>
    <scope>SUBCELLULAR LOCATION</scope>
    <scope>INTERACTION WITH STK11</scope>
    <scope>MUTAGENESIS OF THR-595</scope>
</reference>
<feature type="chain" id="PRO_0000053715" description="Nuclear receptor subfamily 4immunitygroup A member 1">
    <location>
        <begin position="1"/>
        <end position="598"/>
    </location>
</feature>
<feature type="domain" description="NR LBD" evidence="4">
    <location>
        <begin position="360"/>
        <end position="595"/>
    </location>
</feature>
<feature type="DNA-binding region" description="Nuclear receptor" evidence="3">
    <location>
        <begin position="264"/>
        <end position="339"/>
    </location>
</feature>
<feature type="zinc finger region" description="NR C4-type" evidence="3">
    <location>
        <begin position="267"/>
        <end position="287"/>
    </location>
</feature>
<feature type="zinc finger region" description="NR C4-type" evidence="3">
    <location>
        <begin position="303"/>
        <end position="327"/>
    </location>
</feature>
<feature type="region of interest" description="Disordered" evidence="5">
    <location>
        <begin position="1"/>
        <end position="44"/>
    </location>
</feature>
<feature type="region of interest" description="Disordered" evidence="5">
    <location>
        <begin position="131"/>
        <end position="158"/>
    </location>
</feature>
<feature type="region of interest" description="Required for nuclear import" evidence="8">
    <location>
        <begin position="171"/>
        <end position="466"/>
    </location>
</feature>
<feature type="region of interest" description="Disordered" evidence="5">
    <location>
        <begin position="177"/>
        <end position="206"/>
    </location>
</feature>
<feature type="region of interest" description="Disordered" evidence="5">
    <location>
        <begin position="221"/>
        <end position="265"/>
    </location>
</feature>
<feature type="region of interest" description="Required for binding NBRE-containing DNA" evidence="1">
    <location>
        <begin position="268"/>
        <end position="354"/>
    </location>
</feature>
<feature type="region of interest" description="Required for the interaction with RXRA" evidence="11">
    <location>
        <begin position="299"/>
        <end position="361"/>
    </location>
</feature>
<feature type="region of interest" description="Disordered" evidence="5">
    <location>
        <begin position="341"/>
        <end position="361"/>
    </location>
</feature>
<feature type="region of interest" description="Binds lipopolysaccharide" evidence="1">
    <location>
        <begin position="521"/>
        <end position="544"/>
    </location>
</feature>
<feature type="region of interest" description="AF-2" evidence="4">
    <location>
        <begin position="584"/>
        <end position="595"/>
    </location>
</feature>
<feature type="compositionally biased region" description="Low complexity" evidence="5">
    <location>
        <begin position="134"/>
        <end position="145"/>
    </location>
</feature>
<feature type="modified residue" description="Phosphoserine; by PKA" evidence="2">
    <location>
        <position position="341"/>
    </location>
</feature>
<feature type="modified residue" description="Phosphoserine" evidence="10 24">
    <location>
        <position position="351"/>
    </location>
</feature>
<feature type="splice variant" id="VSP_043086" description="In isoform 2." evidence="19">
    <original>M</original>
    <variation>MWLAKACWSIQSEM</variation>
    <location>
        <position position="1"/>
    </location>
</feature>
<feature type="splice variant" id="VSP_047769" description="In isoform 3." evidence="19 20">
    <original>RTVQKNAKYICLANKDCPVDKRRRNRCQFCRFQ</original>
    <variation>VPRSPRWGLLLEMERGWPHPIGTCGLPLGSPPS</variation>
    <location>
        <begin position="293"/>
        <end position="325"/>
    </location>
</feature>
<feature type="splice variant" id="VSP_047770" description="In isoform 3." evidence="19 20">
    <location>
        <begin position="326"/>
        <end position="598"/>
    </location>
</feature>
<feature type="sequence variant" id="VAR_061534" description="In dbSNP:rs1882118.">
    <original>L</original>
    <variation>V</variation>
    <location>
        <position position="26"/>
    </location>
</feature>
<feature type="mutagenesis site" description="No impact on the interaction with RXRA." evidence="11">
    <location>
        <begin position="1"/>
        <end position="50"/>
    </location>
</feature>
<feature type="mutagenesis site" description="Loss of interaction with RXRA." evidence="11">
    <location>
        <begin position="299"/>
        <end position="361"/>
    </location>
</feature>
<feature type="mutagenesis site" description="Abolishes binding to activity regulator Cytosporone B." evidence="12">
    <original>Y</original>
    <variation>A</variation>
    <location>
        <position position="453"/>
    </location>
</feature>
<feature type="mutagenesis site" description="Strongly weakens interaction with STK11." evidence="15">
    <original>T</original>
    <variation>E</variation>
    <location>
        <position position="595"/>
    </location>
</feature>
<feature type="sequence conflict" description="In Ref. 12." evidence="21" ref="12">
    <original>T</original>
    <variation>I</variation>
    <location>
        <position position="253"/>
    </location>
</feature>
<feature type="sequence conflict" description="In Ref. 2; AAA36763." evidence="21" ref="2">
    <original>G</original>
    <variation>P</variation>
    <location>
        <position position="262"/>
    </location>
</feature>
<feature type="sequence conflict" description="In Ref. 8; CAG32985." evidence="21" ref="8">
    <original>S</original>
    <variation>F</variation>
    <location>
        <position position="360"/>
    </location>
</feature>
<feature type="sequence conflict" description="In Ref. 2; AAA36763." evidence="21" ref="2">
    <original>R</original>
    <variation>L</variation>
    <location>
        <position position="370"/>
    </location>
</feature>
<feature type="turn" evidence="28">
    <location>
        <begin position="268"/>
        <end position="270"/>
    </location>
</feature>
<feature type="strand" evidence="28">
    <location>
        <begin position="276"/>
        <end position="278"/>
    </location>
</feature>
<feature type="strand" evidence="28">
    <location>
        <begin position="281"/>
        <end position="283"/>
    </location>
</feature>
<feature type="helix" evidence="28">
    <location>
        <begin position="286"/>
        <end position="297"/>
    </location>
</feature>
<feature type="turn" evidence="28">
    <location>
        <begin position="314"/>
        <end position="317"/>
    </location>
</feature>
<feature type="helix" evidence="28">
    <location>
        <begin position="320"/>
        <end position="329"/>
    </location>
</feature>
<feature type="helix" evidence="27">
    <location>
        <begin position="364"/>
        <end position="373"/>
    </location>
</feature>
<feature type="helix" evidence="27">
    <location>
        <begin position="379"/>
        <end position="381"/>
    </location>
</feature>
<feature type="strand" evidence="26">
    <location>
        <begin position="395"/>
        <end position="397"/>
    </location>
</feature>
<feature type="helix" evidence="27">
    <location>
        <begin position="400"/>
        <end position="422"/>
    </location>
</feature>
<feature type="helix" evidence="27">
    <location>
        <begin position="427"/>
        <end position="429"/>
    </location>
</feature>
<feature type="helix" evidence="27">
    <location>
        <begin position="432"/>
        <end position="454"/>
    </location>
</feature>
<feature type="helix" evidence="27">
    <location>
        <begin position="457"/>
        <end position="459"/>
    </location>
</feature>
<feature type="strand" evidence="27">
    <location>
        <begin position="461"/>
        <end position="463"/>
    </location>
</feature>
<feature type="strand" evidence="27">
    <location>
        <begin position="467"/>
        <end position="471"/>
    </location>
</feature>
<feature type="helix" evidence="27">
    <location>
        <begin position="472"/>
        <end position="479"/>
    </location>
</feature>
<feature type="helix" evidence="27">
    <location>
        <begin position="482"/>
        <end position="495"/>
    </location>
</feature>
<feature type="helix" evidence="27">
    <location>
        <begin position="500"/>
        <end position="511"/>
    </location>
</feature>
<feature type="helix" evidence="27">
    <location>
        <begin position="521"/>
        <end position="541"/>
    </location>
</feature>
<feature type="turn" evidence="25">
    <location>
        <begin position="544"/>
        <end position="546"/>
    </location>
</feature>
<feature type="helix" evidence="27">
    <location>
        <begin position="550"/>
        <end position="556"/>
    </location>
</feature>
<feature type="helix" evidence="27">
    <location>
        <begin position="558"/>
        <end position="579"/>
    </location>
</feature>
<feature type="helix" evidence="27">
    <location>
        <begin position="586"/>
        <end position="594"/>
    </location>
</feature>
<dbReference type="EMBL" id="D49728">
    <property type="protein sequence ID" value="BAA08565.1"/>
    <property type="molecule type" value="mRNA"/>
</dbReference>
<dbReference type="EMBL" id="L13740">
    <property type="protein sequence ID" value="AAA36763.1"/>
    <property type="molecule type" value="mRNA"/>
</dbReference>
<dbReference type="EMBL" id="D85245">
    <property type="protein sequence ID" value="BAA12746.1"/>
    <property type="molecule type" value="mRNA"/>
</dbReference>
<dbReference type="EMBL" id="AK297526">
    <property type="protein sequence ID" value="BAG59929.1"/>
    <property type="molecule type" value="mRNA"/>
</dbReference>
<dbReference type="EMBL" id="HQ692855">
    <property type="protein sequence ID" value="ADZ17366.1"/>
    <property type="molecule type" value="mRNA"/>
</dbReference>
<dbReference type="EMBL" id="AB307717">
    <property type="protein sequence ID" value="BAH02308.1"/>
    <property type="molecule type" value="mRNA"/>
</dbReference>
<dbReference type="EMBL" id="BT007144">
    <property type="protein sequence ID" value="AAP35808.1"/>
    <property type="molecule type" value="mRNA"/>
</dbReference>
<dbReference type="EMBL" id="AK314437">
    <property type="protein sequence ID" value="BAG37048.1"/>
    <property type="molecule type" value="mRNA"/>
</dbReference>
<dbReference type="EMBL" id="CR456704">
    <property type="protein sequence ID" value="CAG32985.1"/>
    <property type="molecule type" value="mRNA"/>
</dbReference>
<dbReference type="EMBL" id="AC025259">
    <property type="status" value="NOT_ANNOTATED_CDS"/>
    <property type="molecule type" value="Genomic_DNA"/>
</dbReference>
<dbReference type="EMBL" id="CH471111">
    <property type="protein sequence ID" value="EAW58222.1"/>
    <property type="molecule type" value="Genomic_DNA"/>
</dbReference>
<dbReference type="EMBL" id="CH471111">
    <property type="protein sequence ID" value="EAW58224.1"/>
    <property type="molecule type" value="Genomic_DNA"/>
</dbReference>
<dbReference type="EMBL" id="CH471111">
    <property type="protein sequence ID" value="EAW58225.1"/>
    <property type="molecule type" value="Genomic_DNA"/>
</dbReference>
<dbReference type="EMBL" id="BC016147">
    <property type="protein sequence ID" value="AAH16147.1"/>
    <property type="molecule type" value="mRNA"/>
</dbReference>
<dbReference type="CCDS" id="CCDS55828.1">
    <molecule id="P22736-2"/>
</dbReference>
<dbReference type="CCDS" id="CCDS8818.1">
    <molecule id="P22736-1"/>
</dbReference>
<dbReference type="PIR" id="A37251">
    <property type="entry name" value="A37251"/>
</dbReference>
<dbReference type="RefSeq" id="NP_001189162.1">
    <molecule id="P22736-2"/>
    <property type="nucleotide sequence ID" value="NM_001202233.2"/>
</dbReference>
<dbReference type="RefSeq" id="NP_002126.2">
    <molecule id="P22736-1"/>
    <property type="nucleotide sequence ID" value="NM_002135.4"/>
</dbReference>
<dbReference type="RefSeq" id="NP_775180.1">
    <molecule id="P22736-1"/>
    <property type="nucleotide sequence ID" value="NM_173157.3"/>
</dbReference>
<dbReference type="RefSeq" id="XP_005268881.1">
    <molecule id="P22736-1"/>
    <property type="nucleotide sequence ID" value="XM_005268824.4"/>
</dbReference>
<dbReference type="RefSeq" id="XP_006719426.1">
    <property type="nucleotide sequence ID" value="XM_006719363.1"/>
</dbReference>
<dbReference type="RefSeq" id="XP_006719427.1">
    <property type="nucleotide sequence ID" value="XM_006719364.3"/>
</dbReference>
<dbReference type="RefSeq" id="XP_047284712.1">
    <molecule id="P22736-2"/>
    <property type="nucleotide sequence ID" value="XM_047428756.1"/>
</dbReference>
<dbReference type="RefSeq" id="XP_054227880.1">
    <molecule id="P22736-1"/>
    <property type="nucleotide sequence ID" value="XM_054371905.1"/>
</dbReference>
<dbReference type="PDB" id="2QW4">
    <property type="method" value="X-ray"/>
    <property type="resolution" value="2.80 A"/>
    <property type="chains" value="A/B/C/D=347-598"/>
</dbReference>
<dbReference type="PDB" id="3V3E">
    <property type="method" value="X-ray"/>
    <property type="resolution" value="2.06 A"/>
    <property type="chains" value="A/B=351-598"/>
</dbReference>
<dbReference type="PDB" id="3V3Q">
    <property type="method" value="X-ray"/>
    <property type="resolution" value="2.22 A"/>
    <property type="chains" value="A/B=351-598"/>
</dbReference>
<dbReference type="PDB" id="4JGV">
    <property type="method" value="X-ray"/>
    <property type="resolution" value="3.01 A"/>
    <property type="chains" value="A/B=351-598"/>
</dbReference>
<dbReference type="PDB" id="4KZI">
    <property type="method" value="X-ray"/>
    <property type="resolution" value="2.41 A"/>
    <property type="chains" value="A/B=351-598"/>
</dbReference>
<dbReference type="PDB" id="4KZJ">
    <property type="method" value="X-ray"/>
    <property type="resolution" value="2.12 A"/>
    <property type="chains" value="A/B=351-598"/>
</dbReference>
<dbReference type="PDB" id="4KZM">
    <property type="method" value="X-ray"/>
    <property type="resolution" value="2.30 A"/>
    <property type="chains" value="A/B=351-598"/>
</dbReference>
<dbReference type="PDB" id="4RE8">
    <property type="method" value="X-ray"/>
    <property type="resolution" value="2.16 A"/>
    <property type="chains" value="A/B=351-598"/>
</dbReference>
<dbReference type="PDB" id="4REE">
    <property type="method" value="X-ray"/>
    <property type="resolution" value="2.37 A"/>
    <property type="chains" value="A/B=351-598"/>
</dbReference>
<dbReference type="PDB" id="4REF">
    <property type="method" value="X-ray"/>
    <property type="resolution" value="2.10 A"/>
    <property type="chains" value="A/B=351-598"/>
</dbReference>
<dbReference type="PDB" id="4RZE">
    <property type="method" value="X-ray"/>
    <property type="resolution" value="2.49 A"/>
    <property type="chains" value="A/B=351-598"/>
</dbReference>
<dbReference type="PDB" id="4RZF">
    <property type="method" value="X-ray"/>
    <property type="resolution" value="1.99 A"/>
    <property type="chains" value="A/B=351-598"/>
</dbReference>
<dbReference type="PDB" id="4RZG">
    <property type="method" value="X-ray"/>
    <property type="resolution" value="2.70 A"/>
    <property type="chains" value="A/B=351-598"/>
</dbReference>
<dbReference type="PDB" id="4WHF">
    <property type="method" value="X-ray"/>
    <property type="resolution" value="2.27 A"/>
    <property type="chains" value="A/B=351-598"/>
</dbReference>
<dbReference type="PDB" id="4WHG">
    <property type="method" value="X-ray"/>
    <property type="resolution" value="2.18 A"/>
    <property type="chains" value="A/B=351-598"/>
</dbReference>
<dbReference type="PDB" id="6KZ5">
    <property type="method" value="X-ray"/>
    <property type="resolution" value="4.45 A"/>
    <property type="chains" value="A/B=351-598"/>
</dbReference>
<dbReference type="PDB" id="6LC1">
    <property type="method" value="X-ray"/>
    <property type="resolution" value="3.12 A"/>
    <property type="chains" value="A/D/G/J=265-351"/>
</dbReference>
<dbReference type="PDB" id="8WUY">
    <property type="method" value="X-ray"/>
    <property type="resolution" value="2.60 A"/>
    <property type="chains" value="A/B=351-598"/>
</dbReference>
<dbReference type="PDB" id="8Y7L">
    <property type="method" value="X-ray"/>
    <property type="resolution" value="2.68 A"/>
    <property type="chains" value="A/B=361-598"/>
</dbReference>
<dbReference type="PDBsum" id="2QW4"/>
<dbReference type="PDBsum" id="3V3E"/>
<dbReference type="PDBsum" id="3V3Q"/>
<dbReference type="PDBsum" id="4JGV"/>
<dbReference type="PDBsum" id="4KZI"/>
<dbReference type="PDBsum" id="4KZJ"/>
<dbReference type="PDBsum" id="4KZM"/>
<dbReference type="PDBsum" id="4RE8"/>
<dbReference type="PDBsum" id="4REE"/>
<dbReference type="PDBsum" id="4REF"/>
<dbReference type="PDBsum" id="4RZE"/>
<dbReference type="PDBsum" id="4RZF"/>
<dbReference type="PDBsum" id="4RZG"/>
<dbReference type="PDBsum" id="4WHF"/>
<dbReference type="PDBsum" id="4WHG"/>
<dbReference type="PDBsum" id="6KZ5"/>
<dbReference type="PDBsum" id="6LC1"/>
<dbReference type="PDBsum" id="8WUY"/>
<dbReference type="PDBsum" id="8Y7L"/>
<dbReference type="SMR" id="P22736"/>
<dbReference type="BioGRID" id="109407">
    <property type="interactions" value="207"/>
</dbReference>
<dbReference type="CORUM" id="P22736"/>
<dbReference type="DIP" id="DIP-40392N"/>
<dbReference type="FunCoup" id="P22736">
    <property type="interactions" value="1349"/>
</dbReference>
<dbReference type="IntAct" id="P22736">
    <property type="interactions" value="113"/>
</dbReference>
<dbReference type="MINT" id="P22736"/>
<dbReference type="STRING" id="9606.ENSP00000440864"/>
<dbReference type="BindingDB" id="P22736"/>
<dbReference type="ChEMBL" id="CHEMBL1293229"/>
<dbReference type="DrugCentral" id="P22736"/>
<dbReference type="GuidetoPHARMACOLOGY" id="629"/>
<dbReference type="MoonDB" id="P22736">
    <property type="type" value="Predicted"/>
</dbReference>
<dbReference type="GlyGen" id="P22736">
    <property type="glycosylation" value="3 sites, 1 O-linked glycan (1 site)"/>
</dbReference>
<dbReference type="iPTMnet" id="P22736"/>
<dbReference type="PhosphoSitePlus" id="P22736"/>
<dbReference type="BioMuta" id="NR4A1"/>
<dbReference type="DMDM" id="127819"/>
<dbReference type="jPOST" id="P22736"/>
<dbReference type="MassIVE" id="P22736"/>
<dbReference type="PaxDb" id="9606-ENSP00000440864"/>
<dbReference type="PeptideAtlas" id="P22736"/>
<dbReference type="ProteomicsDB" id="54032">
    <molecule id="P22736-1"/>
</dbReference>
<dbReference type="ProteomicsDB" id="54033">
    <molecule id="P22736-2"/>
</dbReference>
<dbReference type="ProteomicsDB" id="60662"/>
<dbReference type="Pumba" id="P22736"/>
<dbReference type="Antibodypedia" id="14466">
    <property type="antibodies" value="712 antibodies from 43 providers"/>
</dbReference>
<dbReference type="DNASU" id="3164"/>
<dbReference type="Ensembl" id="ENST00000243050.5">
    <molecule id="P22736-1"/>
    <property type="protein sequence ID" value="ENSP00000243050.1"/>
    <property type="gene ID" value="ENSG00000123358.20"/>
</dbReference>
<dbReference type="Ensembl" id="ENST00000360284.7">
    <molecule id="P22736-2"/>
    <property type="protein sequence ID" value="ENSP00000353427.3"/>
    <property type="gene ID" value="ENSG00000123358.20"/>
</dbReference>
<dbReference type="Ensembl" id="ENST00000394824.2">
    <molecule id="P22736-1"/>
    <property type="protein sequence ID" value="ENSP00000378301.2"/>
    <property type="gene ID" value="ENSG00000123358.20"/>
</dbReference>
<dbReference type="Ensembl" id="ENST00000394825.6">
    <molecule id="P22736-1"/>
    <property type="protein sequence ID" value="ENSP00000378302.1"/>
    <property type="gene ID" value="ENSG00000123358.20"/>
</dbReference>
<dbReference type="Ensembl" id="ENST00000548232.1">
    <molecule id="P22736-3"/>
    <property type="protein sequence ID" value="ENSP00000449587.1"/>
    <property type="gene ID" value="ENSG00000123358.20"/>
</dbReference>
<dbReference type="Ensembl" id="ENST00000550082.5">
    <molecule id="P22736-2"/>
    <property type="protein sequence ID" value="ENSP00000449539.1"/>
    <property type="gene ID" value="ENSG00000123358.20"/>
</dbReference>
<dbReference type="GeneID" id="3164"/>
<dbReference type="KEGG" id="hsa:3164"/>
<dbReference type="MANE-Select" id="ENST00000394825.6">
    <property type="protein sequence ID" value="ENSP00000378302.1"/>
    <property type="RefSeq nucleotide sequence ID" value="NM_173157.3"/>
    <property type="RefSeq protein sequence ID" value="NP_775180.1"/>
</dbReference>
<dbReference type="UCSC" id="uc001rzs.4">
    <molecule id="P22736-1"/>
    <property type="organism name" value="human"/>
</dbReference>
<dbReference type="AGR" id="HGNC:7980"/>
<dbReference type="CTD" id="3164"/>
<dbReference type="DisGeNET" id="3164"/>
<dbReference type="GeneCards" id="NR4A1"/>
<dbReference type="HGNC" id="HGNC:7980">
    <property type="gene designation" value="NR4A1"/>
</dbReference>
<dbReference type="HPA" id="ENSG00000123358">
    <property type="expression patterns" value="Low tissue specificity"/>
</dbReference>
<dbReference type="MIM" id="139139">
    <property type="type" value="gene"/>
</dbReference>
<dbReference type="neXtProt" id="NX_P22736"/>
<dbReference type="OpenTargets" id="ENSG00000123358"/>
<dbReference type="PharmGKB" id="PA31761"/>
<dbReference type="VEuPathDB" id="HostDB:ENSG00000123358"/>
<dbReference type="eggNOG" id="KOG4217">
    <property type="taxonomic scope" value="Eukaryota"/>
</dbReference>
<dbReference type="GeneTree" id="ENSGT00950000183038"/>
<dbReference type="HOGENOM" id="CLU_007368_14_2_1"/>
<dbReference type="InParanoid" id="P22736"/>
<dbReference type="OMA" id="YSCQFTA"/>
<dbReference type="OrthoDB" id="5952118at2759"/>
<dbReference type="PAN-GO" id="P22736">
    <property type="GO annotations" value="7 GO annotations based on evolutionary models"/>
</dbReference>
<dbReference type="PhylomeDB" id="P22736"/>
<dbReference type="TreeFam" id="TF315430"/>
<dbReference type="PathwayCommons" id="P22736"/>
<dbReference type="Reactome" id="R-HSA-198693">
    <property type="pathway name" value="AKT phosphorylates targets in the nucleus"/>
</dbReference>
<dbReference type="Reactome" id="R-HSA-383280">
    <property type="pathway name" value="Nuclear Receptor transcription pathway"/>
</dbReference>
<dbReference type="Reactome" id="R-HSA-5674400">
    <property type="pathway name" value="Constitutive Signaling by AKT1 E17K in Cancer"/>
</dbReference>
<dbReference type="SignaLink" id="P22736"/>
<dbReference type="SIGNOR" id="P22736"/>
<dbReference type="BioGRID-ORCS" id="3164">
    <property type="hits" value="21 hits in 1181 CRISPR screens"/>
</dbReference>
<dbReference type="CD-CODE" id="927B5294">
    <property type="entry name" value="Nur7 condensate"/>
</dbReference>
<dbReference type="ChiTaRS" id="NR4A1">
    <property type="organism name" value="human"/>
</dbReference>
<dbReference type="EvolutionaryTrace" id="P22736"/>
<dbReference type="GeneWiki" id="Nerve_Growth_factor_IB"/>
<dbReference type="GenomeRNAi" id="3164"/>
<dbReference type="Pharos" id="P22736">
    <property type="development level" value="Tchem"/>
</dbReference>
<dbReference type="PRO" id="PR:P22736"/>
<dbReference type="Proteomes" id="UP000005640">
    <property type="component" value="Chromosome 12"/>
</dbReference>
<dbReference type="RNAct" id="P22736">
    <property type="molecule type" value="protein"/>
</dbReference>
<dbReference type="Bgee" id="ENSG00000123358">
    <property type="expression patterns" value="Expressed in mucosa of stomach and 207 other cell types or tissues"/>
</dbReference>
<dbReference type="ExpressionAtlas" id="P22736">
    <property type="expression patterns" value="baseline and differential"/>
</dbReference>
<dbReference type="GO" id="GO:0000785">
    <property type="term" value="C:chromatin"/>
    <property type="evidence" value="ECO:0000250"/>
    <property type="project" value="UniProtKB"/>
</dbReference>
<dbReference type="GO" id="GO:0005829">
    <property type="term" value="C:cytosol"/>
    <property type="evidence" value="ECO:0000314"/>
    <property type="project" value="HPA"/>
</dbReference>
<dbReference type="GO" id="GO:0001650">
    <property type="term" value="C:fibrillar center"/>
    <property type="evidence" value="ECO:0000314"/>
    <property type="project" value="HPA"/>
</dbReference>
<dbReference type="GO" id="GO:0005739">
    <property type="term" value="C:mitochondrion"/>
    <property type="evidence" value="ECO:0000314"/>
    <property type="project" value="UniProtKB"/>
</dbReference>
<dbReference type="GO" id="GO:0031965">
    <property type="term" value="C:nuclear membrane"/>
    <property type="evidence" value="ECO:0000314"/>
    <property type="project" value="HPA"/>
</dbReference>
<dbReference type="GO" id="GO:0016607">
    <property type="term" value="C:nuclear speck"/>
    <property type="evidence" value="ECO:0000314"/>
    <property type="project" value="HPA"/>
</dbReference>
<dbReference type="GO" id="GO:0005654">
    <property type="term" value="C:nucleoplasm"/>
    <property type="evidence" value="ECO:0000314"/>
    <property type="project" value="HPA"/>
</dbReference>
<dbReference type="GO" id="GO:0005634">
    <property type="term" value="C:nucleus"/>
    <property type="evidence" value="ECO:0000314"/>
    <property type="project" value="UniProtKB"/>
</dbReference>
<dbReference type="GO" id="GO:0005667">
    <property type="term" value="C:transcription regulator complex"/>
    <property type="evidence" value="ECO:0000318"/>
    <property type="project" value="GO_Central"/>
</dbReference>
<dbReference type="GO" id="GO:0003677">
    <property type="term" value="F:DNA binding"/>
    <property type="evidence" value="ECO:0000250"/>
    <property type="project" value="BHF-UCL"/>
</dbReference>
<dbReference type="GO" id="GO:0001228">
    <property type="term" value="F:DNA-binding transcription activator activity, RNA polymerase II-specific"/>
    <property type="evidence" value="ECO:0000250"/>
    <property type="project" value="UniProtKB"/>
</dbReference>
<dbReference type="GO" id="GO:0000981">
    <property type="term" value="F:DNA-binding transcription factor activity, RNA polymerase II-specific"/>
    <property type="evidence" value="ECO:0000314"/>
    <property type="project" value="UniProtKB"/>
</dbReference>
<dbReference type="GO" id="GO:0042802">
    <property type="term" value="F:identical protein binding"/>
    <property type="evidence" value="ECO:0007669"/>
    <property type="project" value="Ensembl"/>
</dbReference>
<dbReference type="GO" id="GO:0001530">
    <property type="term" value="F:lipopolysaccharide binding"/>
    <property type="evidence" value="ECO:0000250"/>
    <property type="project" value="UniProtKB"/>
</dbReference>
<dbReference type="GO" id="GO:0035259">
    <property type="term" value="F:nuclear glucocorticoid receptor binding"/>
    <property type="evidence" value="ECO:0000318"/>
    <property type="project" value="GO_Central"/>
</dbReference>
<dbReference type="GO" id="GO:0004879">
    <property type="term" value="F:nuclear receptor activity"/>
    <property type="evidence" value="ECO:0000304"/>
    <property type="project" value="ProtInc"/>
</dbReference>
<dbReference type="GO" id="GO:0046982">
    <property type="term" value="F:protein heterodimerization activity"/>
    <property type="evidence" value="ECO:0000250"/>
    <property type="project" value="UniProtKB"/>
</dbReference>
<dbReference type="GO" id="GO:0000978">
    <property type="term" value="F:RNA polymerase II cis-regulatory region sequence-specific DNA binding"/>
    <property type="evidence" value="ECO:0000318"/>
    <property type="project" value="GO_Central"/>
</dbReference>
<dbReference type="GO" id="GO:1990837">
    <property type="term" value="F:sequence-specific double-stranded DNA binding"/>
    <property type="evidence" value="ECO:0000314"/>
    <property type="project" value="ARUK-UCL"/>
</dbReference>
<dbReference type="GO" id="GO:0008270">
    <property type="term" value="F:zinc ion binding"/>
    <property type="evidence" value="ECO:0007669"/>
    <property type="project" value="UniProtKB-KW"/>
</dbReference>
<dbReference type="GO" id="GO:0006915">
    <property type="term" value="P:apoptotic process"/>
    <property type="evidence" value="ECO:0007669"/>
    <property type="project" value="Ensembl"/>
</dbReference>
<dbReference type="GO" id="GO:0002042">
    <property type="term" value="P:cell migration involved in sprouting angiogenesis"/>
    <property type="evidence" value="ECO:0000314"/>
    <property type="project" value="BHF-UCL"/>
</dbReference>
<dbReference type="GO" id="GO:0071376">
    <property type="term" value="P:cellular response to corticotropin-releasing hormone stimulus"/>
    <property type="evidence" value="ECO:0000250"/>
    <property type="project" value="UniProtKB"/>
</dbReference>
<dbReference type="GO" id="GO:0044344">
    <property type="term" value="P:cellular response to fibroblast growth factor stimulus"/>
    <property type="evidence" value="ECO:0000315"/>
    <property type="project" value="BHF-UCL"/>
</dbReference>
<dbReference type="GO" id="GO:0035924">
    <property type="term" value="P:cellular response to vascular endothelial growth factor stimulus"/>
    <property type="evidence" value="ECO:0000315"/>
    <property type="project" value="BHF-UCL"/>
</dbReference>
<dbReference type="GO" id="GO:0032497">
    <property type="term" value="P:detection of lipopolysaccharide"/>
    <property type="evidence" value="ECO:0000250"/>
    <property type="project" value="UniProtKB"/>
</dbReference>
<dbReference type="GO" id="GO:0035767">
    <property type="term" value="P:endothelial cell chemotaxis"/>
    <property type="evidence" value="ECO:0000315"/>
    <property type="project" value="BHF-UCL"/>
</dbReference>
<dbReference type="GO" id="GO:0045444">
    <property type="term" value="P:fat cell differentiation"/>
    <property type="evidence" value="ECO:0000250"/>
    <property type="project" value="UniProtKB"/>
</dbReference>
<dbReference type="GO" id="GO:0006954">
    <property type="term" value="P:inflammatory response"/>
    <property type="evidence" value="ECO:0007669"/>
    <property type="project" value="UniProtKB-KW"/>
</dbReference>
<dbReference type="GO" id="GO:0042116">
    <property type="term" value="P:macrophage activation"/>
    <property type="evidence" value="ECO:0007669"/>
    <property type="project" value="Ensembl"/>
</dbReference>
<dbReference type="GO" id="GO:0045786">
    <property type="term" value="P:negative regulation of cell cycle"/>
    <property type="evidence" value="ECO:0000250"/>
    <property type="project" value="UniProtKB"/>
</dbReference>
<dbReference type="GO" id="GO:0160075">
    <property type="term" value="P:non-canonical inflammasome complex assembly"/>
    <property type="evidence" value="ECO:0000250"/>
    <property type="project" value="UniProtKB"/>
</dbReference>
<dbReference type="GO" id="GO:0043065">
    <property type="term" value="P:positive regulation of apoptotic process"/>
    <property type="evidence" value="ECO:0007669"/>
    <property type="project" value="Ensembl"/>
</dbReference>
<dbReference type="GO" id="GO:0001938">
    <property type="term" value="P:positive regulation of endothelial cell proliferation"/>
    <property type="evidence" value="ECO:0000315"/>
    <property type="project" value="BHF-UCL"/>
</dbReference>
<dbReference type="GO" id="GO:0045944">
    <property type="term" value="P:positive regulation of transcription by RNA polymerase II"/>
    <property type="evidence" value="ECO:0000314"/>
    <property type="project" value="UniProtKB"/>
</dbReference>
<dbReference type="GO" id="GO:0006606">
    <property type="term" value="P:protein import into nucleus"/>
    <property type="evidence" value="ECO:0007669"/>
    <property type="project" value="Ensembl"/>
</dbReference>
<dbReference type="GO" id="GO:0006357">
    <property type="term" value="P:regulation of transcription by RNA polymerase II"/>
    <property type="evidence" value="ECO:0000318"/>
    <property type="project" value="GO_Central"/>
</dbReference>
<dbReference type="GO" id="GO:0061469">
    <property type="term" value="P:regulation of type B pancreatic cell proliferation"/>
    <property type="evidence" value="ECO:0000250"/>
    <property type="project" value="UniProtKB"/>
</dbReference>
<dbReference type="GO" id="GO:0007165">
    <property type="term" value="P:signal transduction"/>
    <property type="evidence" value="ECO:0000304"/>
    <property type="project" value="ProtInc"/>
</dbReference>
<dbReference type="GO" id="GO:0035914">
    <property type="term" value="P:skeletal muscle cell differentiation"/>
    <property type="evidence" value="ECO:0007669"/>
    <property type="project" value="Ensembl"/>
</dbReference>
<dbReference type="GO" id="GO:0006366">
    <property type="term" value="P:transcription by RNA polymerase II"/>
    <property type="evidence" value="ECO:0007669"/>
    <property type="project" value="Ensembl"/>
</dbReference>
<dbReference type="CDD" id="cd06969">
    <property type="entry name" value="NR_DBD_NGFI-B"/>
    <property type="match status" value="1"/>
</dbReference>
<dbReference type="CDD" id="cd07348">
    <property type="entry name" value="NR_LBD_NGFI-B"/>
    <property type="match status" value="1"/>
</dbReference>
<dbReference type="FunFam" id="1.10.565.10:FF:000008">
    <property type="entry name" value="Nuclear receptor subfamily 4 group A member 1"/>
    <property type="match status" value="1"/>
</dbReference>
<dbReference type="FunFam" id="3.30.50.10:FF:000009">
    <property type="entry name" value="nuclear receptor subfamily 4 group A member 2"/>
    <property type="match status" value="1"/>
</dbReference>
<dbReference type="Gene3D" id="3.30.50.10">
    <property type="entry name" value="Erythroid Transcription Factor GATA-1, subunit A"/>
    <property type="match status" value="1"/>
</dbReference>
<dbReference type="Gene3D" id="1.10.565.10">
    <property type="entry name" value="Retinoid X Receptor"/>
    <property type="match status" value="1"/>
</dbReference>
<dbReference type="InterPro" id="IPR035500">
    <property type="entry name" value="NHR-like_dom_sf"/>
</dbReference>
<dbReference type="InterPro" id="IPR003071">
    <property type="entry name" value="NR4A1"/>
</dbReference>
<dbReference type="InterPro" id="IPR003070">
    <property type="entry name" value="NR4A1-3"/>
</dbReference>
<dbReference type="InterPro" id="IPR000536">
    <property type="entry name" value="Nucl_hrmn_rcpt_lig-bd"/>
</dbReference>
<dbReference type="InterPro" id="IPR001723">
    <property type="entry name" value="Nuclear_hrmn_rcpt"/>
</dbReference>
<dbReference type="InterPro" id="IPR001628">
    <property type="entry name" value="Znf_hrmn_rcpt"/>
</dbReference>
<dbReference type="InterPro" id="IPR013088">
    <property type="entry name" value="Znf_NHR/GATA"/>
</dbReference>
<dbReference type="PANTHER" id="PTHR24085">
    <property type="entry name" value="NUCLEAR HORMONE RECEPTOR"/>
    <property type="match status" value="1"/>
</dbReference>
<dbReference type="PANTHER" id="PTHR24085:SF1">
    <property type="entry name" value="NUCLEAR RECEPTOR SUBFAMILY 4 GROUP A MEMBER 1"/>
    <property type="match status" value="1"/>
</dbReference>
<dbReference type="Pfam" id="PF00104">
    <property type="entry name" value="Hormone_recep"/>
    <property type="match status" value="1"/>
</dbReference>
<dbReference type="Pfam" id="PF00105">
    <property type="entry name" value="zf-C4"/>
    <property type="match status" value="1"/>
</dbReference>
<dbReference type="PRINTS" id="PR01285">
    <property type="entry name" value="HMRNUCRECPTR"/>
</dbReference>
<dbReference type="PRINTS" id="PR01284">
    <property type="entry name" value="NUCLEARECPTR"/>
</dbReference>
<dbReference type="PRINTS" id="PR00398">
    <property type="entry name" value="STRDHORMONER"/>
</dbReference>
<dbReference type="PRINTS" id="PR00047">
    <property type="entry name" value="STROIDFINGER"/>
</dbReference>
<dbReference type="SMART" id="SM00430">
    <property type="entry name" value="HOLI"/>
    <property type="match status" value="1"/>
</dbReference>
<dbReference type="SMART" id="SM00399">
    <property type="entry name" value="ZnF_C4"/>
    <property type="match status" value="1"/>
</dbReference>
<dbReference type="SUPFAM" id="SSF57716">
    <property type="entry name" value="Glucocorticoid receptor-like (DNA-binding domain)"/>
    <property type="match status" value="1"/>
</dbReference>
<dbReference type="SUPFAM" id="SSF48508">
    <property type="entry name" value="Nuclear receptor ligand-binding domain"/>
    <property type="match status" value="1"/>
</dbReference>
<dbReference type="PROSITE" id="PS51843">
    <property type="entry name" value="NR_LBD"/>
    <property type="match status" value="1"/>
</dbReference>
<dbReference type="PROSITE" id="PS00031">
    <property type="entry name" value="NUCLEAR_REC_DBD_1"/>
    <property type="match status" value="1"/>
</dbReference>
<dbReference type="PROSITE" id="PS51030">
    <property type="entry name" value="NUCLEAR_REC_DBD_2"/>
    <property type="match status" value="1"/>
</dbReference>
<gene>
    <name type="primary">NR4A1</name>
    <name type="synonym">GFRP1</name>
    <name type="synonym">HMR</name>
    <name type="synonym">NAK1</name>
</gene>
<evidence type="ECO:0000250" key="1">
    <source>
        <dbReference type="UniProtKB" id="P12813"/>
    </source>
</evidence>
<evidence type="ECO:0000250" key="2">
    <source>
        <dbReference type="UniProtKB" id="P22829"/>
    </source>
</evidence>
<evidence type="ECO:0000255" key="3">
    <source>
        <dbReference type="PROSITE-ProRule" id="PRU00407"/>
    </source>
</evidence>
<evidence type="ECO:0000255" key="4">
    <source>
        <dbReference type="PROSITE-ProRule" id="PRU01189"/>
    </source>
</evidence>
<evidence type="ECO:0000256" key="5">
    <source>
        <dbReference type="SAM" id="MobiDB-lite"/>
    </source>
</evidence>
<evidence type="ECO:0000269" key="6">
    <source>
    </source>
</evidence>
<evidence type="ECO:0000269" key="7">
    <source>
    </source>
</evidence>
<evidence type="ECO:0000269" key="8">
    <source>
    </source>
</evidence>
<evidence type="ECO:0000269" key="9">
    <source>
    </source>
</evidence>
<evidence type="ECO:0000269" key="10">
    <source>
    </source>
</evidence>
<evidence type="ECO:0000269" key="11">
    <source>
    </source>
</evidence>
<evidence type="ECO:0000269" key="12">
    <source>
    </source>
</evidence>
<evidence type="ECO:0000269" key="13">
    <source>
    </source>
</evidence>
<evidence type="ECO:0000269" key="14">
    <source>
    </source>
</evidence>
<evidence type="ECO:0000269" key="15">
    <source>
    </source>
</evidence>
<evidence type="ECO:0000269" key="16">
    <source>
    </source>
</evidence>
<evidence type="ECO:0000269" key="17">
    <source>
    </source>
</evidence>
<evidence type="ECO:0000269" key="18">
    <source>
    </source>
</evidence>
<evidence type="ECO:0000303" key="19">
    <source>
    </source>
</evidence>
<evidence type="ECO:0000303" key="20">
    <source ref="3"/>
</evidence>
<evidence type="ECO:0000305" key="21"/>
<evidence type="ECO:0007744" key="22">
    <source>
        <dbReference type="PDB" id="3V3E"/>
    </source>
</evidence>
<evidence type="ECO:0007744" key="23">
    <source>
        <dbReference type="PDB" id="3V3Q"/>
    </source>
</evidence>
<evidence type="ECO:0007744" key="24">
    <source>
    </source>
</evidence>
<evidence type="ECO:0007829" key="25">
    <source>
        <dbReference type="PDB" id="3V3Q"/>
    </source>
</evidence>
<evidence type="ECO:0007829" key="26">
    <source>
        <dbReference type="PDB" id="4REF"/>
    </source>
</evidence>
<evidence type="ECO:0007829" key="27">
    <source>
        <dbReference type="PDB" id="4RZF"/>
    </source>
</evidence>
<evidence type="ECO:0007829" key="28">
    <source>
        <dbReference type="PDB" id="6LC1"/>
    </source>
</evidence>
<protein>
    <recommendedName>
        <fullName>Nuclear receptor subfamily 4immunitygroup A member 1</fullName>
    </recommendedName>
    <alternativeName>
        <fullName>Early response protein NAK1</fullName>
    </alternativeName>
    <alternativeName>
        <fullName>Nuclear hormone receptor NUR/77</fullName>
        <shortName>Nur77</shortName>
    </alternativeName>
    <alternativeName>
        <fullName>Orphan nuclear receptor HMR</fullName>
    </alternativeName>
    <alternativeName>
        <fullName>Orphan nuclear receptor TR3</fullName>
    </alternativeName>
    <alternativeName>
        <fullName>ST-59</fullName>
    </alternativeName>
    <alternativeName>
        <fullName>Testicular receptor 3</fullName>
    </alternativeName>
</protein>
<comment type="function">
    <text evidence="1 2 7 12 15 17 18">Orphan nuclear receptor. Binds the NGFI-B response element (NBRE) 5'-AAAGGTCA-3' (PubMed:18690216, PubMed:8121493, PubMed:9315652). Binds 9-cis-retinoic acid outside of its ligand-binding (NR LBD) domain (PubMed:18690216). Participates in energy homeostasis by sequestrating the kinase STK11 in the nucleus, thereby attenuating cytoplasmic AMPK activation (PubMed:22983157). Regulates the inflammatory response in macrophages by regulating metabolic adaptations during inflammation, including repressing the transcription of genes involved in the citric acid cycle (TCA) (By similarity). Inhibits NF-kappa-B signaling by binding to low-affinity NF-kappa-B binding sites, such as at the IL2 promoter (PubMed:15466594). May act concomitantly with NR4A2 in regulating the expression of delayed-early genes during liver regeneration (By similarity). Plays a role in the vascular response to injury (By similarity).</text>
</comment>
<comment type="function">
    <text evidence="1">In the cytosol, upon its detection of both bacterial lipopolysaccharide (LPS) and NBRE-containing mitochondrial DNA released by GSDMD pores during pyroptosis, it promotes non-canonical NLRP3 inflammasome activation by stimulating association of NLRP3 and NEK7.</text>
</comment>
<comment type="cofactor">
    <cofactor evidence="2">
        <name>Zn(2+)</name>
        <dbReference type="ChEBI" id="CHEBI:29105"/>
    </cofactor>
    <text evidence="2">Binds 2 zinc ions.</text>
</comment>
<comment type="activity regulation">
    <text evidence="12 18">Its transcription factor activity is activated by binding cytosporone B (Csn-B) via its ligand-binding (NR LBD) domain and stimulates recruitment of coactivators NCOA1 and NCOA2, but not NCOA3, to promoters (PubMed:18690216). Csn-B-binding is also accompanied by its translocation to the mitochondrion (PubMed:18690216). Its transcription factor activity is activated by corticotropin-releasing hormone (CRH) and forskolin (PubMed:9315652). Not activated by binding cytosporone C (Csn-C) (PubMed:18690216).</text>
</comment>
<comment type="subunit">
    <text evidence="1 2 6 8 11 14 15">Binds the NGFI-B response element (NBRE) as a monomer (PubMed:18690216). Binds the Nur response element (NurRE), consisting of two inverse NBRE-related octanucleotide repeats separated by 6 base-pairs, as a dimer (PubMed:18690216, PubMed:9315652). Interacts (via N-terminus) with NLRP3 (via LRR repeat domain); the interaction is direct, requires binding of NR4A1/Nur77 to NBRE-containing dsDNA and lipopolysaccharide, and leads to non-canonical NLRP3 inflammasome activation (By similarity). Interacts with GADD45GIP1 (PubMed:15459248). Interacts with STK11 (PubMed:22983157). Interacts with IFI27 (PubMed:22427340). Heterodimer (via DNA-binding domain) with RXRA (via C-terminus); DNA-binding of the heterodimer is enhanced by 9-cis retinoic acid (PubMed:15509776, PubMed:17761950). Competes for the RXRA interaction with EP300 and thereby attenuates EP300 mediated acetylation of RXRA (PubMed:17761950). Interacts with NCOA1 (PubMed:18690216). Interacts with NCOA2 (PubMed:18690216). Interacts with NCOA3 (PubMed:18690216).</text>
</comment>
<comment type="interaction">
    <interactant intactId="EBI-721550">
        <id>P22736</id>
    </interactant>
    <interactant intactId="EBI-2687890">
        <id>Q9P2G1</id>
        <label>ANKIB1</label>
    </interactant>
    <organismsDiffer>false</organismsDiffer>
    <experiments>2</experiments>
</comment>
<comment type="interaction">
    <interactant intactId="EBI-721550">
        <id>P22736</id>
    </interactant>
    <interactant intactId="EBI-77694">
        <id>P10415</id>
        <label>BCL2</label>
    </interactant>
    <organismsDiffer>false</organismsDiffer>
    <experiments>7</experiments>
</comment>
<comment type="interaction">
    <interactant intactId="EBI-721550">
        <id>P22736</id>
    </interactant>
    <interactant intactId="EBI-745859">
        <id>P55273</id>
        <label>CDKN2D</label>
    </interactant>
    <organismsDiffer>false</organismsDiffer>
    <experiments>4</experiments>
</comment>
<comment type="interaction">
    <interactant intactId="EBI-721550">
        <id>P22736</id>
    </interactant>
    <interactant intactId="EBI-1051556">
        <id>O60888</id>
        <label>CUTA</label>
    </interactant>
    <organismsDiffer>false</organismsDiffer>
    <experiments>2</experiments>
</comment>
<comment type="interaction">
    <interactant intactId="EBI-721550">
        <id>P22736</id>
    </interactant>
    <interactant intactId="EBI-3926629">
        <id>P32189</id>
        <label>GK</label>
    </interactant>
    <organismsDiffer>false</organismsDiffer>
    <experiments>3</experiments>
</comment>
<comment type="interaction">
    <interactant intactId="EBI-721550">
        <id>P22736</id>
    </interactant>
    <interactant intactId="EBI-27124263">
        <id>P40305-2</id>
        <label>IFI27</label>
    </interactant>
    <organismsDiffer>false</organismsDiffer>
    <experiments>8</experiments>
</comment>
<comment type="interaction">
    <interactant intactId="EBI-721550">
        <id>P22736</id>
    </interactant>
    <interactant intactId="EBI-10172150">
        <id>P60370</id>
        <label>KRTAP10-5</label>
    </interactant>
    <organismsDiffer>false</organismsDiffer>
    <experiments>3</experiments>
</comment>
<comment type="interaction">
    <interactant intactId="EBI-721550">
        <id>P22736</id>
    </interactant>
    <interactant intactId="EBI-2341787">
        <id>Q17RB8</id>
        <label>LONRF1</label>
    </interactant>
    <organismsDiffer>false</organismsDiffer>
    <experiments>3</experiments>
</comment>
<comment type="interaction">
    <interactant intactId="EBI-721550">
        <id>P22736</id>
    </interactant>
    <interactant intactId="EBI-352602">
        <id>P43243</id>
        <label>MATR3</label>
    </interactant>
    <organismsDiffer>false</organismsDiffer>
    <experiments>2</experiments>
</comment>
<comment type="interaction">
    <interactant intactId="EBI-721550">
        <id>P22736</id>
    </interactant>
    <interactant intactId="EBI-10290053">
        <id>Q96JS3</id>
        <label>PGBD1</label>
    </interactant>
    <organismsDiffer>false</organismsDiffer>
    <experiments>3</experiments>
</comment>
<comment type="interaction">
    <interactant intactId="EBI-721550">
        <id>P22736</id>
    </interactant>
    <interactant intactId="EBI-310731">
        <id>Q9Y4D7</id>
        <label>PLXND1</label>
    </interactant>
    <organismsDiffer>false</organismsDiffer>
    <experiments>2</experiments>
</comment>
<comment type="interaction">
    <interactant intactId="EBI-721550">
        <id>P22736</id>
    </interactant>
    <interactant intactId="EBI-78738">
        <id>Q99873</id>
        <label>PRMT1</label>
    </interactant>
    <organismsDiffer>false</organismsDiffer>
    <experiments>6</experiments>
</comment>
<comment type="interaction">
    <interactant intactId="EBI-721550">
        <id>P22736</id>
    </interactant>
    <interactant intactId="EBI-518675">
        <id>P40763</id>
        <label>STAT3</label>
    </interactant>
    <organismsDiffer>false</organismsDiffer>
    <experiments>3</experiments>
</comment>
<comment type="interaction">
    <interactant intactId="EBI-721550">
        <id>P22736</id>
    </interactant>
    <interactant intactId="EBI-366083">
        <id>P04637</id>
        <label>TP53</label>
    </interactant>
    <organismsDiffer>false</organismsDiffer>
    <experiments>6</experiments>
</comment>
<comment type="interaction">
    <interactant intactId="EBI-721550">
        <id>P22736</id>
    </interactant>
    <interactant intactId="EBI-355007">
        <id>P04350</id>
        <label>TUBB4A</label>
    </interactant>
    <organismsDiffer>false</organismsDiffer>
    <experiments>2</experiments>
</comment>
<comment type="interaction">
    <interactant intactId="EBI-721550">
        <id>P22736</id>
    </interactant>
    <interactant intactId="EBI-748201">
        <id>P50552</id>
        <label>VASP</label>
    </interactant>
    <organismsDiffer>false</organismsDiffer>
    <experiments>2</experiments>
</comment>
<comment type="interaction">
    <interactant intactId="EBI-721550">
        <id>P22736</id>
    </interactant>
    <interactant intactId="EBI-355867">
        <id>O14980</id>
        <label>XPO1</label>
    </interactant>
    <organismsDiffer>false</organismsDiffer>
    <experiments>2</experiments>
</comment>
<comment type="interaction">
    <interactant intactId="EBI-721550">
        <id>P22736</id>
    </interactant>
    <interactant intactId="EBI-1779322">
        <id>P03120</id>
        <label>E2</label>
    </interactant>
    <organismsDiffer>true</organismsDiffer>
    <experiments>3</experiments>
</comment>
<comment type="interaction">
    <interactant intactId="EBI-721550">
        <id>P22736</id>
    </interactant>
    <interactant intactId="EBI-9028517">
        <id>PRO_0000037545</id>
        <dbReference type="UniProtKB" id="Q9WMX2"/>
    </interactant>
    <organismsDiffer>true</organismsDiffer>
    <experiments>2</experiments>
</comment>
<comment type="interaction">
    <interactant intactId="EBI-16085263">
        <id>P22736-1</id>
    </interactant>
    <interactant intactId="EBI-849893">
        <id>O60238</id>
        <label>BNIP3L</label>
    </interactant>
    <organismsDiffer>false</organismsDiffer>
    <experiments>4</experiments>
</comment>
<comment type="interaction">
    <interactant intactId="EBI-16085263">
        <id>P22736-1</id>
    </interactant>
    <interactant intactId="EBI-15834191">
        <id>Q16539-1</id>
        <label>MAPK14</label>
    </interactant>
    <organismsDiffer>false</organismsDiffer>
    <experiments>5</experiments>
</comment>
<comment type="interaction">
    <interactant intactId="EBI-16085263">
        <id>P22736-1</id>
    </interactant>
    <interactant intactId="EBI-73886">
        <id>Q04206</id>
        <label>RELA</label>
    </interactant>
    <organismsDiffer>false</organismsDiffer>
    <experiments>3</experiments>
</comment>
<comment type="interaction">
    <interactant intactId="EBI-16085263">
        <id>P22736-1</id>
    </interactant>
    <interactant intactId="EBI-359074">
        <id>P12235</id>
        <label>SLC25A4</label>
    </interactant>
    <organismsDiffer>false</organismsDiffer>
    <experiments>2</experiments>
</comment>
<comment type="interaction">
    <interactant intactId="EBI-12697871">
        <id>P22736-2</id>
    </interactant>
    <interactant intactId="EBI-10290053">
        <id>Q96JS3</id>
        <label>PGBD1</label>
    </interactant>
    <organismsDiffer>false</organismsDiffer>
    <experiments>3</experiments>
</comment>
<comment type="subcellular location">
    <subcellularLocation>
        <location evidence="8 11 12 13 14 15 17">Nucleus</location>
    </subcellularLocation>
    <subcellularLocation>
        <location evidence="8 13 14">Cytoplasm</location>
        <location evidence="8 13 14">Cytosol</location>
    </subcellularLocation>
    <subcellularLocation>
        <location evidence="11 12">Mitochondrion</location>
    </subcellularLocation>
    <text evidence="11 14">Nuclear export to the cytosol is XPO1-mediated and positively regulated by IFI27 (PubMed:22427340). Translocation to the mitochondrion upon interaction with RXRA and upon the presence of 9-cis retinoic acid (PubMed:17761950).</text>
</comment>
<comment type="alternative products">
    <event type="alternative splicing"/>
    <isoform>
        <id>P22736-1</id>
        <name>1</name>
        <sequence type="displayed"/>
    </isoform>
    <isoform>
        <id>P22736-2</id>
        <name>2</name>
        <sequence type="described" ref="VSP_043086"/>
    </isoform>
    <isoform>
        <id>P22736-3</id>
        <name>3</name>
        <sequence type="described" ref="VSP_047769 VSP_047770"/>
    </isoform>
</comment>
<comment type="tissue specificity">
    <text>Fetal muscle and adult liver, brain and thyroid.</text>
</comment>
<comment type="induction">
    <text evidence="9 12 18">Induced by cytosporone B (Csn-B); directly stimulates its own expression (PubMed:18690216). Induced by corticotropin-releasing hormone (CRH) (PubMed:9315652). Induced by growth-stimulating agents (PubMed:1651101).</text>
</comment>
<comment type="domain">
    <text evidence="16">The NR LBD domain binds the lipid A moiety of lipopolysaccharide (LPS) in the cytosol.</text>
</comment>
<comment type="PTM">
    <text evidence="10">Phosphorylated at Ser-351 by RPS6KA1 and RPS6KA3 in response to mitogenic or stress stimuli.</text>
</comment>
<comment type="PTM">
    <text evidence="13">Acetylated by p300/CBP, acetylation increases stability. Deacetylated by HDAC1.</text>
</comment>
<comment type="similarity">
    <text evidence="21">Belongs to the nuclear hormone receptor family. NR4 subfamily.</text>
</comment>
<comment type="online information" name="Atlas of Genetics and Cytogenetics in Oncology and Haematology">
    <link uri="https://atlasgeneticsoncology.org/gene/41573/NR4A1"/>
</comment>
<sequence length="598" mass="64463">MPCIQAQYGTPAPSPGPRDHLASDPLTPEFIKPTMDLASPEAAPAAPTALPSFSTFMDGYTGEFDTFLYQLPGTVQPCSSASSSASSTSSSSATSPASASFKFEDFQVYGCYPGPLSGPVDEALSSSGSDYYGSPCSAPSPSTPSFQPPQLSPWDGSFGHFSPSQTYEGLRAWTEQLPKASGPPQPPAFFSFSPPTGPSPSLAQSPLKLFPSQATHQLGEGESYSMPTAFPGLAPTSPHLEGSGILDTPVTSTKARSGAPGGSEGRCAVCGDNASCQHYGVRTCEGCKGFFKRTVQKNAKYICLANKDCPVDKRRRNRCQFCRFQKCLAVGMVKEVVRTDSLKGRRGRLPSKPKQPPDASPANLLTSLVRAHLDSGPSTAKLDYSKFQELVLPHFGKEDAGDVQQFYDLLSGSLEVIRKWAEKIPGFAELSPADQDLLLESAFLELFILRLAYRSKPGEGKLIFCSGLVLHRLQCARGFGDWIDSILAFSRSLHSLLVDVPAFACLSALVLITDRHGLQEPRRVEELQNRIASCLKEHVAAVAGEPQPASCLSRLLGKLPELRTLCTQGLQRIFYLKLEDLVPPPPIIDKIFMDTLPF</sequence>
<name>NR4A1_HUMAN</name>
<keyword id="KW-0002">3D-structure</keyword>
<keyword id="KW-0007">Acetylation</keyword>
<keyword id="KW-0025">Alternative splicing</keyword>
<keyword id="KW-0963">Cytoplasm</keyword>
<keyword id="KW-0238">DNA-binding</keyword>
<keyword id="KW-0395">Inflammatory response</keyword>
<keyword id="KW-0479">Metal-binding</keyword>
<keyword id="KW-0496">Mitochondrion</keyword>
<keyword id="KW-0539">Nucleus</keyword>
<keyword id="KW-0597">Phosphoprotein</keyword>
<keyword id="KW-1267">Proteomics identification</keyword>
<keyword id="KW-0675">Receptor</keyword>
<keyword id="KW-1185">Reference proteome</keyword>
<keyword id="KW-0804">Transcription</keyword>
<keyword id="KW-0805">Transcription regulation</keyword>
<keyword id="KW-0862">Zinc</keyword>
<keyword id="KW-0863">Zinc-finger</keyword>
<accession>P22736</accession>
<accession>B4DML7</accession>
<accession>Q15627</accession>
<accession>Q53Y00</accession>
<accession>Q6IBU8</accession>
<organism>
    <name type="scientific">Homo sapiens</name>
    <name type="common">Human</name>
    <dbReference type="NCBI Taxonomy" id="9606"/>
    <lineage>
        <taxon>Eukaryota</taxon>
        <taxon>Metazoa</taxon>
        <taxon>Chordata</taxon>
        <taxon>Craniata</taxon>
        <taxon>Vertebrata</taxon>
        <taxon>Euteleostomi</taxon>
        <taxon>Mammalia</taxon>
        <taxon>Eutheria</taxon>
        <taxon>Euarchontoglires</taxon>
        <taxon>Primates</taxon>
        <taxon>Haplorrhini</taxon>
        <taxon>Catarrhini</taxon>
        <taxon>Hominidae</taxon>
        <taxon>Homo</taxon>
    </lineage>
</organism>
<proteinExistence type="evidence at protein level"/>